<comment type="function">
    <text evidence="2">Lipid transfer protein required for autophagosome completion and peroxisome degradation. Tethers the edge of the isolation membrane (IM) to the endoplasmic reticulum (ER) and mediates direct lipid transfer from ER to IM for IM expansion. ATG2 binds to the ER exit site (ERES), which is the membrane source for autophagosome formation, using basic residues in its N-terminal region (NR) and to the expanding edge of the IM through its C-terminal region. The latter binding is assisted by an ATG18-PtdIns3P interaction. ATG2 then extracts phospholipids from the membrane source using its NR and transfers them to ATG9 to the IM through its predicted beta-sheet-rich structure for membrane expansion.</text>
</comment>
<comment type="catalytic activity">
    <reaction evidence="1">
        <text>a 1,2-diacyl-sn-glycero-3-phosphocholine(in) = a 1,2-diacyl-sn-glycero-3-phosphocholine(out)</text>
        <dbReference type="Rhea" id="RHEA:38571"/>
        <dbReference type="ChEBI" id="CHEBI:57643"/>
    </reaction>
</comment>
<comment type="catalytic activity">
    <reaction evidence="1">
        <text>a 1,2-diacyl-sn-glycero-3-phospho-L-serine(in) = a 1,2-diacyl-sn-glycero-3-phospho-L-serine(out)</text>
        <dbReference type="Rhea" id="RHEA:38663"/>
        <dbReference type="ChEBI" id="CHEBI:57262"/>
    </reaction>
</comment>
<comment type="catalytic activity">
    <reaction evidence="1">
        <text>a 1,2-diacyl-sn-glycero-3-phosphoethanolamine(in) = a 1,2-diacyl-sn-glycero-3-phosphoethanolamine(out)</text>
        <dbReference type="Rhea" id="RHEA:38895"/>
        <dbReference type="ChEBI" id="CHEBI:64612"/>
    </reaction>
</comment>
<comment type="subcellular location">
    <subcellularLocation>
        <location evidence="2">Preautophagosomal structure membrane</location>
        <topology evidence="2">Peripheral membrane protein</topology>
    </subcellularLocation>
    <subcellularLocation>
        <location evidence="2">Endoplasmic reticulum membrane</location>
        <topology evidence="2">Peripheral membrane protein</topology>
    </subcellularLocation>
</comment>
<comment type="similarity">
    <text evidence="5">Belongs to the ATG2 family.</text>
</comment>
<organism>
    <name type="scientific">Mycosarcoma maydis</name>
    <name type="common">Corn smut fungus</name>
    <name type="synonym">Ustilago maydis</name>
    <dbReference type="NCBI Taxonomy" id="5270"/>
    <lineage>
        <taxon>Eukaryota</taxon>
        <taxon>Fungi</taxon>
        <taxon>Dikarya</taxon>
        <taxon>Basidiomycota</taxon>
        <taxon>Ustilaginomycotina</taxon>
        <taxon>Ustilaginomycetes</taxon>
        <taxon>Ustilaginales</taxon>
        <taxon>Ustilaginaceae</taxon>
        <taxon>Mycosarcoma</taxon>
    </lineage>
</organism>
<reference key="1">
    <citation type="journal article" date="2006" name="Nature">
        <title>Insights from the genome of the biotrophic fungal plant pathogen Ustilago maydis.</title>
        <authorList>
            <person name="Kaemper J."/>
            <person name="Kahmann R."/>
            <person name="Boelker M."/>
            <person name="Ma L.-J."/>
            <person name="Brefort T."/>
            <person name="Saville B.J."/>
            <person name="Banuett F."/>
            <person name="Kronstad J.W."/>
            <person name="Gold S.E."/>
            <person name="Mueller O."/>
            <person name="Perlin M.H."/>
            <person name="Woesten H.A.B."/>
            <person name="de Vries R."/>
            <person name="Ruiz-Herrera J."/>
            <person name="Reynaga-Pena C.G."/>
            <person name="Snetselaar K."/>
            <person name="McCann M."/>
            <person name="Perez-Martin J."/>
            <person name="Feldbruegge M."/>
            <person name="Basse C.W."/>
            <person name="Steinberg G."/>
            <person name="Ibeas J.I."/>
            <person name="Holloman W."/>
            <person name="Guzman P."/>
            <person name="Farman M.L."/>
            <person name="Stajich J.E."/>
            <person name="Sentandreu R."/>
            <person name="Gonzalez-Prieto J.M."/>
            <person name="Kennell J.C."/>
            <person name="Molina L."/>
            <person name="Schirawski J."/>
            <person name="Mendoza-Mendoza A."/>
            <person name="Greilinger D."/>
            <person name="Muench K."/>
            <person name="Roessel N."/>
            <person name="Scherer M."/>
            <person name="Vranes M."/>
            <person name="Ladendorf O."/>
            <person name="Vincon V."/>
            <person name="Fuchs U."/>
            <person name="Sandrock B."/>
            <person name="Meng S."/>
            <person name="Ho E.C.H."/>
            <person name="Cahill M.J."/>
            <person name="Boyce K.J."/>
            <person name="Klose J."/>
            <person name="Klosterman S.J."/>
            <person name="Deelstra H.J."/>
            <person name="Ortiz-Castellanos L."/>
            <person name="Li W."/>
            <person name="Sanchez-Alonso P."/>
            <person name="Schreier P.H."/>
            <person name="Haeuser-Hahn I."/>
            <person name="Vaupel M."/>
            <person name="Koopmann E."/>
            <person name="Friedrich G."/>
            <person name="Voss H."/>
            <person name="Schlueter T."/>
            <person name="Margolis J."/>
            <person name="Platt D."/>
            <person name="Swimmer C."/>
            <person name="Gnirke A."/>
            <person name="Chen F."/>
            <person name="Vysotskaia V."/>
            <person name="Mannhaupt G."/>
            <person name="Gueldener U."/>
            <person name="Muensterkoetter M."/>
            <person name="Haase D."/>
            <person name="Oesterheld M."/>
            <person name="Mewes H.-W."/>
            <person name="Mauceli E.W."/>
            <person name="DeCaprio D."/>
            <person name="Wade C.M."/>
            <person name="Butler J."/>
            <person name="Young S.K."/>
            <person name="Jaffe D.B."/>
            <person name="Calvo S.E."/>
            <person name="Nusbaum C."/>
            <person name="Galagan J.E."/>
            <person name="Birren B.W."/>
        </authorList>
    </citation>
    <scope>NUCLEOTIDE SEQUENCE [LARGE SCALE GENOMIC DNA]</scope>
    <source>
        <strain>DSM 14603 / FGSC 9021 / UM521</strain>
    </source>
</reference>
<reference key="2">
    <citation type="submission" date="2014-09" db="EMBL/GenBank/DDBJ databases">
        <authorList>
            <person name="Gueldener U."/>
            <person name="Muensterkoetter M."/>
            <person name="Walter M.C."/>
            <person name="Mannhaupt G."/>
            <person name="Kahmann R."/>
        </authorList>
    </citation>
    <scope>GENOME REANNOTATION</scope>
    <source>
        <strain>DSM 14603 / FGSC 9021 / UM521</strain>
    </source>
</reference>
<name>ATG2_MYCMD</name>
<accession>Q4PFE7</accession>
<accession>A0A0D1E6P2</accession>
<keyword id="KW-0072">Autophagy</keyword>
<keyword id="KW-0256">Endoplasmic reticulum</keyword>
<keyword id="KW-0445">Lipid transport</keyword>
<keyword id="KW-0472">Membrane</keyword>
<keyword id="KW-0653">Protein transport</keyword>
<keyword id="KW-1185">Reference proteome</keyword>
<keyword id="KW-0813">Transport</keyword>
<evidence type="ECO:0000250" key="1">
    <source>
        <dbReference type="UniProtKB" id="O94649"/>
    </source>
</evidence>
<evidence type="ECO:0000250" key="2">
    <source>
        <dbReference type="UniProtKB" id="P53855"/>
    </source>
</evidence>
<evidence type="ECO:0000255" key="3"/>
<evidence type="ECO:0000256" key="4">
    <source>
        <dbReference type="SAM" id="MobiDB-lite"/>
    </source>
</evidence>
<evidence type="ECO:0000305" key="5"/>
<feature type="chain" id="PRO_0000317814" description="Autophagy-related protein 2">
    <location>
        <begin position="1"/>
        <end position="2081"/>
    </location>
</feature>
<feature type="domain" description="Chorein N-terminal" evidence="3">
    <location>
        <begin position="30"/>
        <end position="131"/>
    </location>
</feature>
<feature type="region of interest" description="Disordered" evidence="4">
    <location>
        <begin position="226"/>
        <end position="253"/>
    </location>
</feature>
<feature type="region of interest" description="Disordered" evidence="4">
    <location>
        <begin position="280"/>
        <end position="315"/>
    </location>
</feature>
<feature type="region of interest" description="Disordered" evidence="4">
    <location>
        <begin position="336"/>
        <end position="355"/>
    </location>
</feature>
<feature type="region of interest" description="Disordered" evidence="4">
    <location>
        <begin position="601"/>
        <end position="651"/>
    </location>
</feature>
<feature type="region of interest" description="Disordered" evidence="4">
    <location>
        <begin position="1324"/>
        <end position="1366"/>
    </location>
</feature>
<feature type="compositionally biased region" description="Polar residues" evidence="4">
    <location>
        <begin position="226"/>
        <end position="247"/>
    </location>
</feature>
<feature type="compositionally biased region" description="Polar residues" evidence="4">
    <location>
        <begin position="282"/>
        <end position="294"/>
    </location>
</feature>
<feature type="compositionally biased region" description="Basic and acidic residues" evidence="4">
    <location>
        <begin position="337"/>
        <end position="350"/>
    </location>
</feature>
<feature type="compositionally biased region" description="Low complexity" evidence="4">
    <location>
        <begin position="634"/>
        <end position="649"/>
    </location>
</feature>
<feature type="compositionally biased region" description="Polar residues" evidence="4">
    <location>
        <begin position="1324"/>
        <end position="1334"/>
    </location>
</feature>
<feature type="compositionally biased region" description="Polar residues" evidence="4">
    <location>
        <begin position="1342"/>
        <end position="1355"/>
    </location>
</feature>
<proteinExistence type="inferred from homology"/>
<dbReference type="EMBL" id="CM003141">
    <property type="protein sequence ID" value="KIS71266.1"/>
    <property type="molecule type" value="Genomic_DNA"/>
</dbReference>
<dbReference type="RefSeq" id="XP_011387108.1">
    <property type="nucleotide sequence ID" value="XM_011388806.1"/>
</dbReference>
<dbReference type="STRING" id="237631.Q4PFE7"/>
<dbReference type="EnsemblFungi" id="KIS71266">
    <property type="protein sequence ID" value="KIS71266"/>
    <property type="gene ID" value="UMAG_01166"/>
</dbReference>
<dbReference type="GeneID" id="23562264"/>
<dbReference type="KEGG" id="uma:UMAG_01166"/>
<dbReference type="VEuPathDB" id="FungiDB:UMAG_01166"/>
<dbReference type="eggNOG" id="KOG2993">
    <property type="taxonomic scope" value="Eukaryota"/>
</dbReference>
<dbReference type="HOGENOM" id="CLU_000795_0_0_1"/>
<dbReference type="InParanoid" id="Q4PFE7"/>
<dbReference type="OMA" id="SSWQSLK"/>
<dbReference type="OrthoDB" id="18982at2759"/>
<dbReference type="Proteomes" id="UP000000561">
    <property type="component" value="Chromosome 2"/>
</dbReference>
<dbReference type="GO" id="GO:0005789">
    <property type="term" value="C:endoplasmic reticulum membrane"/>
    <property type="evidence" value="ECO:0007669"/>
    <property type="project" value="UniProtKB-SubCell"/>
</dbReference>
<dbReference type="GO" id="GO:0061908">
    <property type="term" value="C:phagophore"/>
    <property type="evidence" value="ECO:0000318"/>
    <property type="project" value="GO_Central"/>
</dbReference>
<dbReference type="GO" id="GO:0000407">
    <property type="term" value="C:phagophore assembly site"/>
    <property type="evidence" value="ECO:0000318"/>
    <property type="project" value="GO_Central"/>
</dbReference>
<dbReference type="GO" id="GO:0034045">
    <property type="term" value="C:phagophore assembly site membrane"/>
    <property type="evidence" value="ECO:0007669"/>
    <property type="project" value="UniProtKB-SubCell"/>
</dbReference>
<dbReference type="GO" id="GO:0032266">
    <property type="term" value="F:phosphatidylinositol-3-phosphate binding"/>
    <property type="evidence" value="ECO:0000318"/>
    <property type="project" value="GO_Central"/>
</dbReference>
<dbReference type="GO" id="GO:0043495">
    <property type="term" value="F:protein-membrane adaptor activity"/>
    <property type="evidence" value="ECO:0000318"/>
    <property type="project" value="GO_Central"/>
</dbReference>
<dbReference type="GO" id="GO:0000045">
    <property type="term" value="P:autophagosome assembly"/>
    <property type="evidence" value="ECO:0000318"/>
    <property type="project" value="GO_Central"/>
</dbReference>
<dbReference type="GO" id="GO:0000422">
    <property type="term" value="P:autophagy of mitochondrion"/>
    <property type="evidence" value="ECO:0000318"/>
    <property type="project" value="GO_Central"/>
</dbReference>
<dbReference type="GO" id="GO:0061723">
    <property type="term" value="P:glycophagy"/>
    <property type="evidence" value="ECO:0000318"/>
    <property type="project" value="GO_Central"/>
</dbReference>
<dbReference type="GO" id="GO:0006869">
    <property type="term" value="P:lipid transport"/>
    <property type="evidence" value="ECO:0007669"/>
    <property type="project" value="UniProtKB-KW"/>
</dbReference>
<dbReference type="GO" id="GO:0000425">
    <property type="term" value="P:pexophagy"/>
    <property type="evidence" value="ECO:0000318"/>
    <property type="project" value="GO_Central"/>
</dbReference>
<dbReference type="GO" id="GO:0034727">
    <property type="term" value="P:piecemeal microautophagy of the nucleus"/>
    <property type="evidence" value="ECO:0000318"/>
    <property type="project" value="GO_Central"/>
</dbReference>
<dbReference type="GO" id="GO:0015031">
    <property type="term" value="P:protein transport"/>
    <property type="evidence" value="ECO:0007669"/>
    <property type="project" value="UniProtKB-KW"/>
</dbReference>
<dbReference type="GO" id="GO:0061709">
    <property type="term" value="P:reticulophagy"/>
    <property type="evidence" value="ECO:0000318"/>
    <property type="project" value="GO_Central"/>
</dbReference>
<dbReference type="InterPro" id="IPR026849">
    <property type="entry name" value="ATG2"/>
</dbReference>
<dbReference type="PANTHER" id="PTHR13190">
    <property type="entry name" value="AUTOPHAGY-RELATED 2, ISOFORM A"/>
    <property type="match status" value="1"/>
</dbReference>
<dbReference type="PANTHER" id="PTHR13190:SF1">
    <property type="entry name" value="AUTOPHAGY-RELATED 2, ISOFORM A"/>
    <property type="match status" value="1"/>
</dbReference>
<dbReference type="Pfam" id="PF13329">
    <property type="entry name" value="ATG2_CAD"/>
    <property type="match status" value="1"/>
</dbReference>
<protein>
    <recommendedName>
        <fullName>Autophagy-related protein 2</fullName>
    </recommendedName>
</protein>
<sequence length="2081" mass="226383">MASYFLPSFLTGWDLSSVSAFSLSANLQKRILSYLLKRTLGHLVDGGQLDLEQIDAGIGSGRIEVRNVQLDAQAISRHLPSLPITFVAGQIGSILIQLPVPYFWNGELSINVSDISIHAKPRSDNPEHTSSPQQDLSASFASAASQLFVEDEEAKDLEQSIHESLYPENQKQAQQRTEEEKGSLIATYVEALLTRLKVSIEHVQIHLQSDALDLSLKLSYASMKSSNTRSEQQADASVSDSDQTCGTDSAAVPHRRLLSETKRTLEMQSLELWLQDNRKPSDSINAVSPSSTDGSMDHLVSQPYKPSHEMSQSVASLQASSASLYESAIGESAFPESLEKPNQDPLHGDDISSTAPPPLSGRHLLFSLGQEAVLVTLKTTKERHEFLVSDTASRRVEQKLISIVTDVDVQIGNAGGIIFIDHLSLLMSLLQSFDLTSRHTQQESTLKGPKAQPMRTLSSAQTGGDFTLSCHIDSFNLIIGYDDPHVLQQDQSSLGAFWARPSRAHPDFGHLRLRCNKLAAHYNHAQTGLSPAQSHAQIHFSVDDLGLFEQLPTVLYQQCPPESSRVLPILILDPTLSQSGTDSPARAEHLQHDYASSTVDVSDWRYSPSHQTTGPRSHATPDAQNAAKGARFKSTSIRPGSSSSVPSSPLRTAYSDQGWKIKAPIKSQTQATAPEASLPCFVVSISLPQSCKDQGQVTATVAPVHLFVDISLVTRLMPGLRRFATAQIAALQGVSEPDYELTDSIATLGASVATIQTSTDSLLGHHSTNQAAAEPNPYKLDLQISFVRVDVRTPQVSYDASALGGRSLSSVRLAGLDRRSGILVLQVQHLHLHLGLSETHQTASAVRFASPSTSADGRHNRGPVVTGVINAEKISAFLALPSQSRALVLALIEAIHDDAEVSTPFASSQNALLPRVELSQITETAPGRGQFDPRHGQAKDRCSILIPSIKVELEKTQLDSLQYMADDLTQSVNLWTSDDPDESDSHDAEGLKILGSRFFGSRAGMSIMSTSTDSTATARTSTKNSSLLLTITESSIRLWLPSLSPNTESVGDRRTRSAKSLLLTTTDFELLFDSDKARNTNRIEIRIPDMQLSVEAGSAFAETSSTLLAFRTMERTLNDQSRNMMLLLVLEAYAEPGTSYREQNIDLTLCSVTLAPSFDQELVPRIKRLLKAPAGVFENVEPNEVTRVSFKAKDCSVFVAPQGTQHRAAVAIGEASVKTKLTSHAPKTSIKLAIAGLDVFAIEAESSQSSSRRRAADKSASDHWSKRGYARLLHAPESKVSIHLNTLTRPEVDVKVTKLRVKLQATADTLNVVTGLVGAITETQAAGSTESRSASPLPHDSFMSSTDSEYSNRSNLSEKEVGPIQTSKTADHFDRMAELLSGIEDDAYHLASPLPVAADLVEDDVPSDAAFLGSKGRYHPDIVETTLDSDEFFGGESVASLSLLAPRADTVIFADEDVTVRLLDPKGICPVQEYFTDPGLRPHVNSALGTAASSVRVRVSNFDLSVRLHSGYDWPSTRNAVQQEVKLVRKRLQKIKQLLAEGQVPDDSVEAATSNLLDSMHISLPNVAAEMDADEMMRAVEDEVGDCSDAASTTDSDASASWQALPFVRRDRQASRLDHRRAEASHTKLERSAGSLIDFNLRGLEVEFDKADASLAGNVVSRIAVNARRFEIIDNIKTSTWRTFLTEMQDANSALRHDVESKMVKVEIVYVRPQGLEPEGASVEQPEVRMRARLAPLRLHVDQDALDFLKKFFMFKPPGQKETSGAAAATSGSALPFVQFAEVLPIKIKLDYKPKRVDYNLLRQGKTIELMNFFHFEGSEMVLRHVTLRGINGWARLFDTLNDIWTPDVKANQLADFLSGLGPIRSLVNVGAGLADLVLLPIEQYHKDGRVLRGVQRGAAGFAKTTALEAVKLGARLATGTQVILEQAEHILGGERMEESITASAIGPESGQSFQSLSESVMVERMSRSGSVSRYAQQPLDMRDALAQAYSGLTDHLTSAAQTILAIPMDVFDASDLAGAPTTRSSEHTRSRPVVKAVPIAILRGAQGASHAIAKTMQGVQVALGDRQNVDEQKYKLPPHT</sequence>
<gene>
    <name type="primary">ATG2</name>
    <name type="ORF">UMAG_01166</name>
</gene>